<feature type="initiator methionine" description="Removed" evidence="11">
    <location>
        <position position="1"/>
    </location>
</feature>
<feature type="chain" id="PRO_0000280465" description="Rho GTPase-activating protein 19">
    <location>
        <begin position="2"/>
        <end position="494"/>
    </location>
</feature>
<feature type="domain" description="Rho-GAP" evidence="3">
    <location>
        <begin position="102"/>
        <end position="308"/>
    </location>
</feature>
<feature type="region of interest" description="Disordered" evidence="4">
    <location>
        <begin position="349"/>
        <end position="368"/>
    </location>
</feature>
<feature type="region of interest" description="Disordered" evidence="4">
    <location>
        <begin position="399"/>
        <end position="421"/>
    </location>
</feature>
<feature type="compositionally biased region" description="Basic and acidic residues" evidence="4">
    <location>
        <begin position="354"/>
        <end position="368"/>
    </location>
</feature>
<feature type="compositionally biased region" description="Polar residues" evidence="4">
    <location>
        <begin position="399"/>
        <end position="415"/>
    </location>
</feature>
<feature type="site" description="Arginine finger; crucial for GTP hydrolysis by stabilizing the transition state" evidence="3">
    <location>
        <position position="143"/>
    </location>
</feature>
<feature type="modified residue" description="N-acetylalanine" evidence="11">
    <location>
        <position position="2"/>
    </location>
</feature>
<feature type="modified residue" description="Phosphoserine" evidence="13">
    <location>
        <position position="7"/>
    </location>
</feature>
<feature type="modified residue" description="Phosphoserine" evidence="2">
    <location>
        <position position="31"/>
    </location>
</feature>
<feature type="modified residue" description="Phosphoserine" evidence="13">
    <location>
        <position position="422"/>
    </location>
</feature>
<feature type="modified residue" description="Phosphoserine" evidence="13">
    <location>
        <position position="438"/>
    </location>
</feature>
<feature type="modified residue" description="Phosphoserine" evidence="12">
    <location>
        <position position="470"/>
    </location>
</feature>
<feature type="modified residue" description="Phosphothreonine" evidence="12">
    <location>
        <position position="478"/>
    </location>
</feature>
<feature type="splice variant" id="VSP_023695" description="In isoform 4." evidence="6">
    <location>
        <begin position="1"/>
        <end position="382"/>
    </location>
</feature>
<feature type="splice variant" id="VSP_023696" description="In isoform 3." evidence="7">
    <original>MATEAQSEGEVPARESGRS</original>
    <variation>MPHQKLSALI</variation>
    <location>
        <begin position="1"/>
        <end position="19"/>
    </location>
</feature>
<feature type="splice variant" id="VSP_023697" description="In isoform 6." evidence="8">
    <location>
        <begin position="281"/>
        <end position="309"/>
    </location>
</feature>
<feature type="splice variant" id="VSP_023698" description="In isoform 5." evidence="6">
    <original>VTANDLQENITKLNSGMAFMI</original>
    <variation>GLVLLPTLEESNTITTHCSLI</variation>
    <location>
        <begin position="281"/>
        <end position="301"/>
    </location>
</feature>
<feature type="splice variant" id="VSP_023699" description="In isoform 5." evidence="6">
    <location>
        <begin position="302"/>
        <end position="494"/>
    </location>
</feature>
<feature type="splice variant" id="VSP_023700" description="In isoform 7." evidence="10">
    <location>
        <begin position="332"/>
        <end position="346"/>
    </location>
</feature>
<feature type="splice variant" id="VSP_023701" description="In isoform 2." evidence="9">
    <original>FL</original>
    <variation>NSMATTSLGSIRMTLRGSSSCGCCS</variation>
    <location>
        <begin position="493"/>
        <end position="494"/>
    </location>
</feature>
<feature type="sequence variant" id="VAR_031152" description="In dbSNP:rs17112598.">
    <original>Q</original>
    <variation>R</variation>
    <location>
        <position position="305"/>
    </location>
</feature>
<feature type="sequence conflict" description="In Ref. 1; AAR02412/ABC69298." evidence="10" ref="1">
    <original>C</original>
    <variation>Y</variation>
    <location>
        <position position="28"/>
    </location>
</feature>
<feature type="sequence conflict" description="In Ref. 4; CAH18254." evidence="10" ref="4">
    <original>E</original>
    <variation>A</variation>
    <location>
        <position position="170"/>
    </location>
</feature>
<feature type="sequence conflict" description="In Ref. 2; BAC04165." evidence="10" ref="2">
    <original>E</original>
    <variation>G</variation>
    <location>
        <position position="170"/>
    </location>
</feature>
<feature type="sequence conflict" description="In Ref. 2; BAC04165." evidence="10" ref="2">
    <original>S</original>
    <variation>L</variation>
    <location>
        <position position="420"/>
    </location>
</feature>
<protein>
    <recommendedName>
        <fullName>Rho GTPase-activating protein 19</fullName>
    </recommendedName>
    <alternativeName>
        <fullName>Rho-type GTPase-activating protein 19</fullName>
    </alternativeName>
</protein>
<dbReference type="EMBL" id="DQ338460">
    <property type="protein sequence ID" value="ABC69298.1"/>
    <property type="molecule type" value="mRNA"/>
</dbReference>
<dbReference type="EMBL" id="AY336750">
    <property type="protein sequence ID" value="AAR02412.1"/>
    <property type="molecule type" value="mRNA"/>
</dbReference>
<dbReference type="EMBL" id="AK093441">
    <property type="protein sequence ID" value="BAC04165.1"/>
    <property type="status" value="ALT_FRAME"/>
    <property type="molecule type" value="mRNA"/>
</dbReference>
<dbReference type="EMBL" id="AK074122">
    <property type="protein sequence ID" value="BAB84948.1"/>
    <property type="status" value="ALT_INIT"/>
    <property type="molecule type" value="mRNA"/>
</dbReference>
<dbReference type="EMBL" id="AK090447">
    <property type="protein sequence ID" value="BAC03428.1"/>
    <property type="molecule type" value="mRNA"/>
</dbReference>
<dbReference type="EMBL" id="AK303055">
    <property type="protein sequence ID" value="BAG64173.1"/>
    <property type="molecule type" value="mRNA"/>
</dbReference>
<dbReference type="EMBL" id="CR749412">
    <property type="protein sequence ID" value="CAH18254.1"/>
    <property type="molecule type" value="mRNA"/>
</dbReference>
<dbReference type="EMBL" id="AL359385">
    <property type="status" value="NOT_ANNOTATED_CDS"/>
    <property type="molecule type" value="Genomic_DNA"/>
</dbReference>
<dbReference type="EMBL" id="CH471066">
    <property type="protein sequence ID" value="EAW49952.1"/>
    <property type="molecule type" value="Genomic_DNA"/>
</dbReference>
<dbReference type="EMBL" id="BC113888">
    <property type="protein sequence ID" value="AAI13889.1"/>
    <property type="molecule type" value="mRNA"/>
</dbReference>
<dbReference type="EMBL" id="BC114490">
    <property type="protein sequence ID" value="AAI14491.1"/>
    <property type="molecule type" value="mRNA"/>
</dbReference>
<dbReference type="CCDS" id="CCDS58092.1">
    <molecule id="Q14CB8-3"/>
</dbReference>
<dbReference type="CCDS" id="CCDS73175.1">
    <molecule id="Q14CB8-6"/>
</dbReference>
<dbReference type="CCDS" id="CCDS7454.2">
    <molecule id="Q14CB8-1"/>
</dbReference>
<dbReference type="RefSeq" id="NP_001191229.1">
    <molecule id="Q14CB8-6"/>
    <property type="nucleotide sequence ID" value="NM_001204300.2"/>
</dbReference>
<dbReference type="RefSeq" id="NP_001243352.1">
    <molecule id="Q14CB8-3"/>
    <property type="nucleotide sequence ID" value="NM_001256423.2"/>
</dbReference>
<dbReference type="RefSeq" id="NP_116289.4">
    <molecule id="Q14CB8-1"/>
    <property type="nucleotide sequence ID" value="NM_032900.5"/>
</dbReference>
<dbReference type="SMR" id="Q14CB8"/>
<dbReference type="BioGRID" id="124412">
    <property type="interactions" value="69"/>
</dbReference>
<dbReference type="FunCoup" id="Q14CB8">
    <property type="interactions" value="2756"/>
</dbReference>
<dbReference type="IntAct" id="Q14CB8">
    <property type="interactions" value="44"/>
</dbReference>
<dbReference type="STRING" id="9606.ENSP00000351333"/>
<dbReference type="iPTMnet" id="Q14CB8"/>
<dbReference type="MetOSite" id="Q14CB8"/>
<dbReference type="PhosphoSitePlus" id="Q14CB8"/>
<dbReference type="BioMuta" id="ARHGAP19"/>
<dbReference type="DMDM" id="121948181"/>
<dbReference type="jPOST" id="Q14CB8"/>
<dbReference type="MassIVE" id="Q14CB8"/>
<dbReference type="PaxDb" id="9606-ENSP00000351333"/>
<dbReference type="PeptideAtlas" id="Q14CB8"/>
<dbReference type="ProteomicsDB" id="60317">
    <molecule id="Q14CB8-1"/>
</dbReference>
<dbReference type="ProteomicsDB" id="60318">
    <molecule id="Q14CB8-2"/>
</dbReference>
<dbReference type="ProteomicsDB" id="60319">
    <molecule id="Q14CB8-3"/>
</dbReference>
<dbReference type="ProteomicsDB" id="60320">
    <molecule id="Q14CB8-4"/>
</dbReference>
<dbReference type="ProteomicsDB" id="60321">
    <molecule id="Q14CB8-5"/>
</dbReference>
<dbReference type="ProteomicsDB" id="60322">
    <molecule id="Q14CB8-6"/>
</dbReference>
<dbReference type="ProteomicsDB" id="60323">
    <molecule id="Q14CB8-7"/>
</dbReference>
<dbReference type="Pumba" id="Q14CB8"/>
<dbReference type="Antibodypedia" id="30829">
    <property type="antibodies" value="133 antibodies from 19 providers"/>
</dbReference>
<dbReference type="DNASU" id="84986"/>
<dbReference type="Ensembl" id="ENST00000358308.7">
    <molecule id="Q14CB8-6"/>
    <property type="protein sequence ID" value="ENSP00000351058.4"/>
    <property type="gene ID" value="ENSG00000213390.11"/>
</dbReference>
<dbReference type="Ensembl" id="ENST00000358531.9">
    <molecule id="Q14CB8-1"/>
    <property type="protein sequence ID" value="ENSP00000351333.4"/>
    <property type="gene ID" value="ENSG00000213390.11"/>
</dbReference>
<dbReference type="Ensembl" id="ENST00000371027.5">
    <molecule id="Q14CB8-3"/>
    <property type="protein sequence ID" value="ENSP00000360066.1"/>
    <property type="gene ID" value="ENSG00000213390.11"/>
</dbReference>
<dbReference type="GeneID" id="84986"/>
<dbReference type="KEGG" id="hsa:84986"/>
<dbReference type="MANE-Select" id="ENST00000358531.9">
    <property type="protein sequence ID" value="ENSP00000351333.4"/>
    <property type="RefSeq nucleotide sequence ID" value="NM_032900.6"/>
    <property type="RefSeq protein sequence ID" value="NP_116289.4"/>
</dbReference>
<dbReference type="UCSC" id="uc001kna.5">
    <molecule id="Q14CB8-1"/>
    <property type="organism name" value="human"/>
</dbReference>
<dbReference type="AGR" id="HGNC:23724"/>
<dbReference type="CTD" id="84986"/>
<dbReference type="DisGeNET" id="84986"/>
<dbReference type="GeneCards" id="ARHGAP19"/>
<dbReference type="HGNC" id="HGNC:23724">
    <property type="gene designation" value="ARHGAP19"/>
</dbReference>
<dbReference type="HPA" id="ENSG00000213390">
    <property type="expression patterns" value="Tissue enhanced (lymphoid)"/>
</dbReference>
<dbReference type="MIM" id="611587">
    <property type="type" value="gene"/>
</dbReference>
<dbReference type="neXtProt" id="NX_Q14CB8"/>
<dbReference type="OpenTargets" id="ENSG00000213390"/>
<dbReference type="OpenTargets" id="ENSG00000269891"/>
<dbReference type="PharmGKB" id="PA134917415"/>
<dbReference type="VEuPathDB" id="HostDB:ENSG00000213390"/>
<dbReference type="eggNOG" id="KOG1453">
    <property type="taxonomic scope" value="Eukaryota"/>
</dbReference>
<dbReference type="GeneTree" id="ENSGT00940000157331"/>
<dbReference type="HOGENOM" id="CLU_046228_0_0_1"/>
<dbReference type="InParanoid" id="Q14CB8"/>
<dbReference type="OMA" id="RNQHINK"/>
<dbReference type="OrthoDB" id="10061772at2759"/>
<dbReference type="PAN-GO" id="Q14CB8">
    <property type="GO annotations" value="3 GO annotations based on evolutionary models"/>
</dbReference>
<dbReference type="PhylomeDB" id="Q14CB8"/>
<dbReference type="TreeFam" id="TF326309"/>
<dbReference type="PathwayCommons" id="Q14CB8"/>
<dbReference type="Reactome" id="R-HSA-8980692">
    <property type="pathway name" value="RHOA GTPase cycle"/>
</dbReference>
<dbReference type="SignaLink" id="Q14CB8"/>
<dbReference type="SIGNOR" id="Q14CB8"/>
<dbReference type="BioGRID-ORCS" id="84986">
    <property type="hits" value="25 hits in 1149 CRISPR screens"/>
</dbReference>
<dbReference type="GeneWiki" id="ARHGAP19"/>
<dbReference type="GenomeRNAi" id="84986"/>
<dbReference type="Pharos" id="Q14CB8">
    <property type="development level" value="Tbio"/>
</dbReference>
<dbReference type="PRO" id="PR:Q14CB8"/>
<dbReference type="Proteomes" id="UP000005640">
    <property type="component" value="Chromosome 10"/>
</dbReference>
<dbReference type="RNAct" id="Q14CB8">
    <property type="molecule type" value="protein"/>
</dbReference>
<dbReference type="Bgee" id="ENSG00000213390">
    <property type="expression patterns" value="Expressed in trigeminal ganglion and 170 other cell types or tissues"/>
</dbReference>
<dbReference type="ExpressionAtlas" id="Q14CB8">
    <property type="expression patterns" value="baseline and differential"/>
</dbReference>
<dbReference type="GO" id="GO:0005737">
    <property type="term" value="C:cytoplasm"/>
    <property type="evidence" value="ECO:0000318"/>
    <property type="project" value="GO_Central"/>
</dbReference>
<dbReference type="GO" id="GO:0005829">
    <property type="term" value="C:cytosol"/>
    <property type="evidence" value="ECO:0000304"/>
    <property type="project" value="Reactome"/>
</dbReference>
<dbReference type="GO" id="GO:0043231">
    <property type="term" value="C:intracellular membrane-bounded organelle"/>
    <property type="evidence" value="ECO:0000314"/>
    <property type="project" value="HPA"/>
</dbReference>
<dbReference type="GO" id="GO:0005634">
    <property type="term" value="C:nucleus"/>
    <property type="evidence" value="ECO:0007669"/>
    <property type="project" value="UniProtKB-SubCell"/>
</dbReference>
<dbReference type="GO" id="GO:0005886">
    <property type="term" value="C:plasma membrane"/>
    <property type="evidence" value="ECO:0000314"/>
    <property type="project" value="HPA"/>
</dbReference>
<dbReference type="GO" id="GO:0005096">
    <property type="term" value="F:GTPase activator activity"/>
    <property type="evidence" value="ECO:0000318"/>
    <property type="project" value="GO_Central"/>
</dbReference>
<dbReference type="GO" id="GO:0051056">
    <property type="term" value="P:regulation of small GTPase mediated signal transduction"/>
    <property type="evidence" value="ECO:0000318"/>
    <property type="project" value="GO_Central"/>
</dbReference>
<dbReference type="GO" id="GO:0007165">
    <property type="term" value="P:signal transduction"/>
    <property type="evidence" value="ECO:0007669"/>
    <property type="project" value="InterPro"/>
</dbReference>
<dbReference type="CDD" id="cd04392">
    <property type="entry name" value="RhoGAP_ARHGAP19"/>
    <property type="match status" value="1"/>
</dbReference>
<dbReference type="FunFam" id="1.10.555.10:FF:000022">
    <property type="entry name" value="rho GTPase-activating protein 19"/>
    <property type="match status" value="1"/>
</dbReference>
<dbReference type="Gene3D" id="1.10.555.10">
    <property type="entry name" value="Rho GTPase activation protein"/>
    <property type="match status" value="1"/>
</dbReference>
<dbReference type="InterPro" id="IPR047941">
    <property type="entry name" value="ARHGAP19_RhoGAP"/>
</dbReference>
<dbReference type="InterPro" id="IPR008936">
    <property type="entry name" value="Rho_GTPase_activation_prot"/>
</dbReference>
<dbReference type="InterPro" id="IPR000198">
    <property type="entry name" value="RhoGAP_dom"/>
</dbReference>
<dbReference type="PANTHER" id="PTHR14963">
    <property type="entry name" value="RHO GTPASE ACTIVATING PROTEIN 18,19-RELATED"/>
    <property type="match status" value="1"/>
</dbReference>
<dbReference type="PANTHER" id="PTHR14963:SF7">
    <property type="entry name" value="RHO GTPASE-ACTIVATING PROTEIN 19"/>
    <property type="match status" value="1"/>
</dbReference>
<dbReference type="Pfam" id="PF00620">
    <property type="entry name" value="RhoGAP"/>
    <property type="match status" value="1"/>
</dbReference>
<dbReference type="SMART" id="SM00324">
    <property type="entry name" value="RhoGAP"/>
    <property type="match status" value="1"/>
</dbReference>
<dbReference type="SUPFAM" id="SSF48350">
    <property type="entry name" value="GTPase activation domain, GAP"/>
    <property type="match status" value="1"/>
</dbReference>
<dbReference type="PROSITE" id="PS50238">
    <property type="entry name" value="RHOGAP"/>
    <property type="match status" value="1"/>
</dbReference>
<reference key="1">
    <citation type="journal article" date="2007" name="DNA Seq.">
        <title>Sequence analysis of a human RhoGAP domain-containing gene and characterization of its expression in human multiple tissues.</title>
        <authorList>
            <person name="Lv L."/>
            <person name="Xu J."/>
            <person name="Zhao S."/>
            <person name="Chen C."/>
            <person name="Zhao X."/>
            <person name="Gu S."/>
            <person name="Ji C."/>
            <person name="Xie Y."/>
            <person name="Mao Y."/>
        </authorList>
    </citation>
    <scope>NUCLEOTIDE SEQUENCE [MRNA] (ISOFORMS 1 AND 2)</scope>
    <scope>SUBCELLULAR LOCATION</scope>
    <scope>TISSUE SPECIFICITY</scope>
    <source>
        <tissue>Fetal brain</tissue>
    </source>
</reference>
<reference key="2">
    <citation type="journal article" date="2004" name="Nat. Genet.">
        <title>Complete sequencing and characterization of 21,243 full-length human cDNAs.</title>
        <authorList>
            <person name="Ota T."/>
            <person name="Suzuki Y."/>
            <person name="Nishikawa T."/>
            <person name="Otsuki T."/>
            <person name="Sugiyama T."/>
            <person name="Irie R."/>
            <person name="Wakamatsu A."/>
            <person name="Hayashi K."/>
            <person name="Sato H."/>
            <person name="Nagai K."/>
            <person name="Kimura K."/>
            <person name="Makita H."/>
            <person name="Sekine M."/>
            <person name="Obayashi M."/>
            <person name="Nishi T."/>
            <person name="Shibahara T."/>
            <person name="Tanaka T."/>
            <person name="Ishii S."/>
            <person name="Yamamoto J."/>
            <person name="Saito K."/>
            <person name="Kawai Y."/>
            <person name="Isono Y."/>
            <person name="Nakamura Y."/>
            <person name="Nagahari K."/>
            <person name="Murakami K."/>
            <person name="Yasuda T."/>
            <person name="Iwayanagi T."/>
            <person name="Wagatsuma M."/>
            <person name="Shiratori A."/>
            <person name="Sudo H."/>
            <person name="Hosoiri T."/>
            <person name="Kaku Y."/>
            <person name="Kodaira H."/>
            <person name="Kondo H."/>
            <person name="Sugawara M."/>
            <person name="Takahashi M."/>
            <person name="Kanda K."/>
            <person name="Yokoi T."/>
            <person name="Furuya T."/>
            <person name="Kikkawa E."/>
            <person name="Omura Y."/>
            <person name="Abe K."/>
            <person name="Kamihara K."/>
            <person name="Katsuta N."/>
            <person name="Sato K."/>
            <person name="Tanikawa M."/>
            <person name="Yamazaki M."/>
            <person name="Ninomiya K."/>
            <person name="Ishibashi T."/>
            <person name="Yamashita H."/>
            <person name="Murakawa K."/>
            <person name="Fujimori K."/>
            <person name="Tanai H."/>
            <person name="Kimata M."/>
            <person name="Watanabe M."/>
            <person name="Hiraoka S."/>
            <person name="Chiba Y."/>
            <person name="Ishida S."/>
            <person name="Ono Y."/>
            <person name="Takiguchi S."/>
            <person name="Watanabe S."/>
            <person name="Yosida M."/>
            <person name="Hotuta T."/>
            <person name="Kusano J."/>
            <person name="Kanehori K."/>
            <person name="Takahashi-Fujii A."/>
            <person name="Hara H."/>
            <person name="Tanase T.-O."/>
            <person name="Nomura Y."/>
            <person name="Togiya S."/>
            <person name="Komai F."/>
            <person name="Hara R."/>
            <person name="Takeuchi K."/>
            <person name="Arita M."/>
            <person name="Imose N."/>
            <person name="Musashino K."/>
            <person name="Yuuki H."/>
            <person name="Oshima A."/>
            <person name="Sasaki N."/>
            <person name="Aotsuka S."/>
            <person name="Yoshikawa Y."/>
            <person name="Matsunawa H."/>
            <person name="Ichihara T."/>
            <person name="Shiohata N."/>
            <person name="Sano S."/>
            <person name="Moriya S."/>
            <person name="Momiyama H."/>
            <person name="Satoh N."/>
            <person name="Takami S."/>
            <person name="Terashima Y."/>
            <person name="Suzuki O."/>
            <person name="Nakagawa S."/>
            <person name="Senoh A."/>
            <person name="Mizoguchi H."/>
            <person name="Goto Y."/>
            <person name="Shimizu F."/>
            <person name="Wakebe H."/>
            <person name="Hishigaki H."/>
            <person name="Watanabe T."/>
            <person name="Sugiyama A."/>
            <person name="Takemoto M."/>
            <person name="Kawakami B."/>
            <person name="Yamazaki M."/>
            <person name="Watanabe K."/>
            <person name="Kumagai A."/>
            <person name="Itakura S."/>
            <person name="Fukuzumi Y."/>
            <person name="Fujimori Y."/>
            <person name="Komiyama M."/>
            <person name="Tashiro H."/>
            <person name="Tanigami A."/>
            <person name="Fujiwara T."/>
            <person name="Ono T."/>
            <person name="Yamada K."/>
            <person name="Fujii Y."/>
            <person name="Ozaki K."/>
            <person name="Hirao M."/>
            <person name="Ohmori Y."/>
            <person name="Kawabata A."/>
            <person name="Hikiji T."/>
            <person name="Kobatake N."/>
            <person name="Inagaki H."/>
            <person name="Ikema Y."/>
            <person name="Okamoto S."/>
            <person name="Okitani R."/>
            <person name="Kawakami T."/>
            <person name="Noguchi S."/>
            <person name="Itoh T."/>
            <person name="Shigeta K."/>
            <person name="Senba T."/>
            <person name="Matsumura K."/>
            <person name="Nakajima Y."/>
            <person name="Mizuno T."/>
            <person name="Morinaga M."/>
            <person name="Sasaki M."/>
            <person name="Togashi T."/>
            <person name="Oyama M."/>
            <person name="Hata H."/>
            <person name="Watanabe M."/>
            <person name="Komatsu T."/>
            <person name="Mizushima-Sugano J."/>
            <person name="Satoh T."/>
            <person name="Shirai Y."/>
            <person name="Takahashi Y."/>
            <person name="Nakagawa K."/>
            <person name="Okumura K."/>
            <person name="Nagase T."/>
            <person name="Nomura N."/>
            <person name="Kikuchi H."/>
            <person name="Masuho Y."/>
            <person name="Yamashita R."/>
            <person name="Nakai K."/>
            <person name="Yada T."/>
            <person name="Nakamura Y."/>
            <person name="Ohara O."/>
            <person name="Isogai T."/>
            <person name="Sugano S."/>
        </authorList>
    </citation>
    <scope>NUCLEOTIDE SEQUENCE [LARGE SCALE MRNA] (ISOFORMS 1 AND 3)</scope>
    <source>
        <tissue>Testis</tissue>
    </source>
</reference>
<reference key="3">
    <citation type="journal article" date="2003" name="DNA Res.">
        <title>Characterization of long cDNA clones from human adult spleen. II. The complete sequences of 81 cDNA clones.</title>
        <authorList>
            <person name="Jikuya H."/>
            <person name="Takano J."/>
            <person name="Kikuno R."/>
            <person name="Hirosawa M."/>
            <person name="Nagase T."/>
            <person name="Nomura N."/>
            <person name="Ohara O."/>
        </authorList>
    </citation>
    <scope>NUCLEOTIDE SEQUENCE [LARGE SCALE MRNA] (ISOFORM 4)</scope>
    <scope>NUCLEOTIDE SEQUENCE [LARGE SCALE MRNA] OF 3-427 (ISOFORM 5)</scope>
    <source>
        <tissue>Spleen</tissue>
    </source>
</reference>
<reference key="4">
    <citation type="journal article" date="2007" name="BMC Genomics">
        <title>The full-ORF clone resource of the German cDNA consortium.</title>
        <authorList>
            <person name="Bechtel S."/>
            <person name="Rosenfelder H."/>
            <person name="Duda A."/>
            <person name="Schmidt C.P."/>
            <person name="Ernst U."/>
            <person name="Wellenreuther R."/>
            <person name="Mehrle A."/>
            <person name="Schuster C."/>
            <person name="Bahr A."/>
            <person name="Bloecker H."/>
            <person name="Heubner D."/>
            <person name="Hoerlein A."/>
            <person name="Michel G."/>
            <person name="Wedler H."/>
            <person name="Koehrer K."/>
            <person name="Ottenwaelder B."/>
            <person name="Poustka A."/>
            <person name="Wiemann S."/>
            <person name="Schupp I."/>
        </authorList>
    </citation>
    <scope>NUCLEOTIDE SEQUENCE [LARGE SCALE MRNA] (ISOFORM 1)</scope>
    <source>
        <tissue>Bone marrow</tissue>
    </source>
</reference>
<reference key="5">
    <citation type="journal article" date="2004" name="Nature">
        <title>The DNA sequence and comparative analysis of human chromosome 10.</title>
        <authorList>
            <person name="Deloukas P."/>
            <person name="Earthrowl M.E."/>
            <person name="Grafham D.V."/>
            <person name="Rubenfield M."/>
            <person name="French L."/>
            <person name="Steward C.A."/>
            <person name="Sims S.K."/>
            <person name="Jones M.C."/>
            <person name="Searle S."/>
            <person name="Scott C."/>
            <person name="Howe K."/>
            <person name="Hunt S.E."/>
            <person name="Andrews T.D."/>
            <person name="Gilbert J.G.R."/>
            <person name="Swarbreck D."/>
            <person name="Ashurst J.L."/>
            <person name="Taylor A."/>
            <person name="Battles J."/>
            <person name="Bird C.P."/>
            <person name="Ainscough R."/>
            <person name="Almeida J.P."/>
            <person name="Ashwell R.I.S."/>
            <person name="Ambrose K.D."/>
            <person name="Babbage A.K."/>
            <person name="Bagguley C.L."/>
            <person name="Bailey J."/>
            <person name="Banerjee R."/>
            <person name="Bates K."/>
            <person name="Beasley H."/>
            <person name="Bray-Allen S."/>
            <person name="Brown A.J."/>
            <person name="Brown J.Y."/>
            <person name="Burford D.C."/>
            <person name="Burrill W."/>
            <person name="Burton J."/>
            <person name="Cahill P."/>
            <person name="Camire D."/>
            <person name="Carter N.P."/>
            <person name="Chapman J.C."/>
            <person name="Clark S.Y."/>
            <person name="Clarke G."/>
            <person name="Clee C.M."/>
            <person name="Clegg S."/>
            <person name="Corby N."/>
            <person name="Coulson A."/>
            <person name="Dhami P."/>
            <person name="Dutta I."/>
            <person name="Dunn M."/>
            <person name="Faulkner L."/>
            <person name="Frankish A."/>
            <person name="Frankland J.A."/>
            <person name="Garner P."/>
            <person name="Garnett J."/>
            <person name="Gribble S."/>
            <person name="Griffiths C."/>
            <person name="Grocock R."/>
            <person name="Gustafson E."/>
            <person name="Hammond S."/>
            <person name="Harley J.L."/>
            <person name="Hart E."/>
            <person name="Heath P.D."/>
            <person name="Ho T.P."/>
            <person name="Hopkins B."/>
            <person name="Horne J."/>
            <person name="Howden P.J."/>
            <person name="Huckle E."/>
            <person name="Hynds C."/>
            <person name="Johnson C."/>
            <person name="Johnson D."/>
            <person name="Kana A."/>
            <person name="Kay M."/>
            <person name="Kimberley A.M."/>
            <person name="Kershaw J.K."/>
            <person name="Kokkinaki M."/>
            <person name="Laird G.K."/>
            <person name="Lawlor S."/>
            <person name="Lee H.M."/>
            <person name="Leongamornlert D.A."/>
            <person name="Laird G."/>
            <person name="Lloyd C."/>
            <person name="Lloyd D.M."/>
            <person name="Loveland J."/>
            <person name="Lovell J."/>
            <person name="McLaren S."/>
            <person name="McLay K.E."/>
            <person name="McMurray A."/>
            <person name="Mashreghi-Mohammadi M."/>
            <person name="Matthews L."/>
            <person name="Milne S."/>
            <person name="Nickerson T."/>
            <person name="Nguyen M."/>
            <person name="Overton-Larty E."/>
            <person name="Palmer S.A."/>
            <person name="Pearce A.V."/>
            <person name="Peck A.I."/>
            <person name="Pelan S."/>
            <person name="Phillimore B."/>
            <person name="Porter K."/>
            <person name="Rice C.M."/>
            <person name="Rogosin A."/>
            <person name="Ross M.T."/>
            <person name="Sarafidou T."/>
            <person name="Sehra H.K."/>
            <person name="Shownkeen R."/>
            <person name="Skuce C.D."/>
            <person name="Smith M."/>
            <person name="Standring L."/>
            <person name="Sycamore N."/>
            <person name="Tester J."/>
            <person name="Thorpe A."/>
            <person name="Torcasso W."/>
            <person name="Tracey A."/>
            <person name="Tromans A."/>
            <person name="Tsolas J."/>
            <person name="Wall M."/>
            <person name="Walsh J."/>
            <person name="Wang H."/>
            <person name="Weinstock K."/>
            <person name="West A.P."/>
            <person name="Willey D.L."/>
            <person name="Whitehead S.L."/>
            <person name="Wilming L."/>
            <person name="Wray P.W."/>
            <person name="Young L."/>
            <person name="Chen Y."/>
            <person name="Lovering R.C."/>
            <person name="Moschonas N.K."/>
            <person name="Siebert R."/>
            <person name="Fechtel K."/>
            <person name="Bentley D."/>
            <person name="Durbin R.M."/>
            <person name="Hubbard T."/>
            <person name="Doucette-Stamm L."/>
            <person name="Beck S."/>
            <person name="Smith D.R."/>
            <person name="Rogers J."/>
        </authorList>
    </citation>
    <scope>NUCLEOTIDE SEQUENCE [LARGE SCALE GENOMIC DNA]</scope>
</reference>
<reference key="6">
    <citation type="submission" date="2005-09" db="EMBL/GenBank/DDBJ databases">
        <authorList>
            <person name="Mural R.J."/>
            <person name="Istrail S."/>
            <person name="Sutton G.G."/>
            <person name="Florea L."/>
            <person name="Halpern A.L."/>
            <person name="Mobarry C.M."/>
            <person name="Lippert R."/>
            <person name="Walenz B."/>
            <person name="Shatkay H."/>
            <person name="Dew I."/>
            <person name="Miller J.R."/>
            <person name="Flanigan M.J."/>
            <person name="Edwards N.J."/>
            <person name="Bolanos R."/>
            <person name="Fasulo D."/>
            <person name="Halldorsson B.V."/>
            <person name="Hannenhalli S."/>
            <person name="Turner R."/>
            <person name="Yooseph S."/>
            <person name="Lu F."/>
            <person name="Nusskern D.R."/>
            <person name="Shue B.C."/>
            <person name="Zheng X.H."/>
            <person name="Zhong F."/>
            <person name="Delcher A.L."/>
            <person name="Huson D.H."/>
            <person name="Kravitz S.A."/>
            <person name="Mouchard L."/>
            <person name="Reinert K."/>
            <person name="Remington K.A."/>
            <person name="Clark A.G."/>
            <person name="Waterman M.S."/>
            <person name="Eichler E.E."/>
            <person name="Adams M.D."/>
            <person name="Hunkapiller M.W."/>
            <person name="Myers E.W."/>
            <person name="Venter J.C."/>
        </authorList>
    </citation>
    <scope>NUCLEOTIDE SEQUENCE [LARGE SCALE GENOMIC DNA]</scope>
</reference>
<reference key="7">
    <citation type="journal article" date="2004" name="Genome Res.">
        <title>The status, quality, and expansion of the NIH full-length cDNA project: the Mammalian Gene Collection (MGC).</title>
        <authorList>
            <consortium name="The MGC Project Team"/>
        </authorList>
    </citation>
    <scope>NUCLEOTIDE SEQUENCE [LARGE SCALE MRNA] (ISOFORMS 1 AND 6)</scope>
</reference>
<reference key="8">
    <citation type="journal article" date="2008" name="Proc. Natl. Acad. Sci. U.S.A.">
        <title>A quantitative atlas of mitotic phosphorylation.</title>
        <authorList>
            <person name="Dephoure N."/>
            <person name="Zhou C."/>
            <person name="Villen J."/>
            <person name="Beausoleil S.A."/>
            <person name="Bakalarski C.E."/>
            <person name="Elledge S.J."/>
            <person name="Gygi S.P."/>
        </authorList>
    </citation>
    <scope>IDENTIFICATION BY MASS SPECTROMETRY [LARGE SCALE ANALYSIS]</scope>
    <source>
        <tissue>Cervix carcinoma</tissue>
    </source>
</reference>
<reference key="9">
    <citation type="journal article" date="2009" name="Anal. Chem.">
        <title>Lys-N and trypsin cover complementary parts of the phosphoproteome in a refined SCX-based approach.</title>
        <authorList>
            <person name="Gauci S."/>
            <person name="Helbig A.O."/>
            <person name="Slijper M."/>
            <person name="Krijgsveld J."/>
            <person name="Heck A.J."/>
            <person name="Mohammed S."/>
        </authorList>
    </citation>
    <scope>ACETYLATION [LARGE SCALE ANALYSIS] AT ALA-2</scope>
    <scope>CLEAVAGE OF INITIATOR METHIONINE [LARGE SCALE ANALYSIS]</scope>
    <scope>IDENTIFICATION BY MASS SPECTROMETRY [LARGE SCALE ANALYSIS]</scope>
</reference>
<reference key="10">
    <citation type="journal article" date="2009" name="Sci. Signal.">
        <title>Quantitative phosphoproteomic analysis of T cell receptor signaling reveals system-wide modulation of protein-protein interactions.</title>
        <authorList>
            <person name="Mayya V."/>
            <person name="Lundgren D.H."/>
            <person name="Hwang S.-I."/>
            <person name="Rezaul K."/>
            <person name="Wu L."/>
            <person name="Eng J.K."/>
            <person name="Rodionov V."/>
            <person name="Han D.K."/>
        </authorList>
    </citation>
    <scope>PHOSPHORYLATION [LARGE SCALE ANALYSIS] AT SER-470 AND THR-478</scope>
    <scope>IDENTIFICATION BY MASS SPECTROMETRY [LARGE SCALE ANALYSIS]</scope>
    <source>
        <tissue>Leukemic T-cell</tissue>
    </source>
</reference>
<reference key="11">
    <citation type="journal article" date="2013" name="J. Proteome Res.">
        <title>Toward a comprehensive characterization of a human cancer cell phosphoproteome.</title>
        <authorList>
            <person name="Zhou H."/>
            <person name="Di Palma S."/>
            <person name="Preisinger C."/>
            <person name="Peng M."/>
            <person name="Polat A.N."/>
            <person name="Heck A.J."/>
            <person name="Mohammed S."/>
        </authorList>
    </citation>
    <scope>PHOSPHORYLATION [LARGE SCALE ANALYSIS] AT SER-7; SER-422 AND SER-438</scope>
    <scope>IDENTIFICATION BY MASS SPECTROMETRY [LARGE SCALE ANALYSIS]</scope>
    <source>
        <tissue>Cervix carcinoma</tissue>
        <tissue>Erythroleukemia</tissue>
    </source>
</reference>
<sequence>MATEAQSEGEVPARESGRSDAICSFVICNDSSLRGQPIIFNPDFFVEKLRHEKPEIFTELVVSNITRLIDLPGTELAQLMGEVDLKLPGGAGPASGFFRSLMSLKRKEKGVIFGSPLTEEGIAQIYQLIEYLHKNLRVEGLFRVPGNSVRQQILRDALNNGTDIDLESGEFHSNDVATLLKMFLGELPEPLLTHKHFNAHLKIADLMQFDDKGNKTNIPDKDRQIEALQLLFLILPPPNRNLLKLLLDLLYQTAKKQDKNKMSAYNLALMFAPHVLWPKNVTANDLQENITKLNSGMAFMIKHSQKLFKAPAYIRECARLHYLGSRTQASKDDLDLIASCHTKSFQLAKSQKRNRVDSCPHQEETQHHTEEALRELFQHVHDMPESAKKKQLIRQFNKQSLTQTPGREPSTSQVQKRARSRSFSGLIKRKVLGNQMMSEKKKKNPTPESVAIGELKGTSKENRNLLFSGSPAVTMTPTRLKWSEGKKEGKKGFL</sequence>
<evidence type="ECO:0000250" key="1"/>
<evidence type="ECO:0000250" key="2">
    <source>
        <dbReference type="UniProtKB" id="Q8BRH3"/>
    </source>
</evidence>
<evidence type="ECO:0000255" key="3">
    <source>
        <dbReference type="PROSITE-ProRule" id="PRU00172"/>
    </source>
</evidence>
<evidence type="ECO:0000256" key="4">
    <source>
        <dbReference type="SAM" id="MobiDB-lite"/>
    </source>
</evidence>
<evidence type="ECO:0000269" key="5">
    <source>
    </source>
</evidence>
<evidence type="ECO:0000303" key="6">
    <source>
    </source>
</evidence>
<evidence type="ECO:0000303" key="7">
    <source>
    </source>
</evidence>
<evidence type="ECO:0000303" key="8">
    <source>
    </source>
</evidence>
<evidence type="ECO:0000303" key="9">
    <source>
    </source>
</evidence>
<evidence type="ECO:0000305" key="10"/>
<evidence type="ECO:0007744" key="11">
    <source>
    </source>
</evidence>
<evidence type="ECO:0007744" key="12">
    <source>
    </source>
</evidence>
<evidence type="ECO:0007744" key="13">
    <source>
    </source>
</evidence>
<keyword id="KW-0007">Acetylation</keyword>
<keyword id="KW-0025">Alternative splicing</keyword>
<keyword id="KW-0343">GTPase activation</keyword>
<keyword id="KW-0539">Nucleus</keyword>
<keyword id="KW-0597">Phosphoprotein</keyword>
<keyword id="KW-1267">Proteomics identification</keyword>
<keyword id="KW-1185">Reference proteome</keyword>
<organism>
    <name type="scientific">Homo sapiens</name>
    <name type="common">Human</name>
    <dbReference type="NCBI Taxonomy" id="9606"/>
    <lineage>
        <taxon>Eukaryota</taxon>
        <taxon>Metazoa</taxon>
        <taxon>Chordata</taxon>
        <taxon>Craniata</taxon>
        <taxon>Vertebrata</taxon>
        <taxon>Euteleostomi</taxon>
        <taxon>Mammalia</taxon>
        <taxon>Eutheria</taxon>
        <taxon>Euarchontoglires</taxon>
        <taxon>Primates</taxon>
        <taxon>Haplorrhini</taxon>
        <taxon>Catarrhini</taxon>
        <taxon>Hominidae</taxon>
        <taxon>Homo</taxon>
    </lineage>
</organism>
<proteinExistence type="evidence at protein level"/>
<accession>Q14CB8</accession>
<accession>A1XCP1</accession>
<accession>B4DZR1</accession>
<accession>Q14CF2</accession>
<accession>Q5J8M2</accession>
<accession>Q5T460</accession>
<accession>Q5T462</accession>
<accession>Q68DG6</accession>
<accession>Q8N9X1</accession>
<accession>Q8NF34</accession>
<accession>Q8TEK1</accession>
<name>RHG19_HUMAN</name>
<comment type="function">
    <text evidence="1">GTPase activator for the Rho-type GTPases by converting them to an inactive GDP-bound state.</text>
</comment>
<comment type="interaction">
    <interactant intactId="EBI-954525">
        <id>Q14CB8</id>
    </interactant>
    <interactant intactId="EBI-946046">
        <id>P54252</id>
        <label>ATXN3</label>
    </interactant>
    <organismsDiffer>false</organismsDiffer>
    <experiments>4</experiments>
</comment>
<comment type="subcellular location">
    <subcellularLocation>
        <location evidence="5">Nucleus</location>
    </subcellularLocation>
</comment>
<comment type="alternative products">
    <event type="alternative splicing"/>
    <isoform>
        <id>Q14CB8-1</id>
        <name>1</name>
        <sequence type="displayed"/>
    </isoform>
    <isoform>
        <id>Q14CB8-2</id>
        <name>2</name>
        <sequence type="described" ref="VSP_023701"/>
    </isoform>
    <isoform>
        <id>Q14CB8-3</id>
        <name>3</name>
        <sequence type="described" ref="VSP_023696"/>
    </isoform>
    <isoform>
        <id>Q14CB8-4</id>
        <name>4</name>
        <sequence type="described" ref="VSP_023695"/>
    </isoform>
    <isoform>
        <id>Q14CB8-5</id>
        <name>5</name>
        <sequence type="described" ref="VSP_023698 VSP_023699"/>
    </isoform>
    <isoform>
        <id>Q14CB8-6</id>
        <name>6</name>
        <sequence type="described" ref="VSP_023697"/>
    </isoform>
    <isoform>
        <id>Q14CB8-7</id>
        <name>7</name>
        <sequence type="described" ref="VSP_023700"/>
    </isoform>
</comment>
<comment type="tissue specificity">
    <text evidence="5">Strong expression in fetal heart, brain, placenta, lung, liver, skeletal muscle, kidney and pancreas. Weak expression in adult pancreas, spleen, thymus, and ovary.</text>
</comment>
<comment type="sequence caution" evidence="10">
    <conflict type="erroneous initiation">
        <sequence resource="EMBL-CDS" id="BAB84948"/>
    </conflict>
</comment>
<comment type="sequence caution" evidence="10">
    <conflict type="frameshift">
        <sequence resource="EMBL-CDS" id="BAC04165"/>
    </conflict>
</comment>
<gene>
    <name type="primary">ARHGAP19</name>
</gene>